<protein>
    <recommendedName>
        <fullName evidence="1">Large ribosomal subunit protein uL16</fullName>
    </recommendedName>
    <alternativeName>
        <fullName evidence="2">50S ribosomal protein L16</fullName>
    </alternativeName>
</protein>
<evidence type="ECO:0000255" key="1">
    <source>
        <dbReference type="HAMAP-Rule" id="MF_01342"/>
    </source>
</evidence>
<evidence type="ECO:0000305" key="2"/>
<gene>
    <name evidence="1" type="primary">rplP</name>
    <name type="ordered locus">BOV_1189</name>
</gene>
<name>RL16_BRUO2</name>
<organism>
    <name type="scientific">Brucella ovis (strain ATCC 25840 / 63/290 / NCTC 10512)</name>
    <dbReference type="NCBI Taxonomy" id="444178"/>
    <lineage>
        <taxon>Bacteria</taxon>
        <taxon>Pseudomonadati</taxon>
        <taxon>Pseudomonadota</taxon>
        <taxon>Alphaproteobacteria</taxon>
        <taxon>Hyphomicrobiales</taxon>
        <taxon>Brucellaceae</taxon>
        <taxon>Brucella/Ochrobactrum group</taxon>
        <taxon>Brucella</taxon>
    </lineage>
</organism>
<feature type="chain" id="PRO_1000054585" description="Large ribosomal subunit protein uL16">
    <location>
        <begin position="1"/>
        <end position="137"/>
    </location>
</feature>
<accession>A5VQZ9</accession>
<sequence length="137" mass="15501">MMQPKRTKFRKQFKGRIHGNSKGGTDLNFGAFGLKALEPERVTARQIEAARRAITRHMKRAGRVWIRIFPDLPVTSKPTEVRMGKGKGSVDYWACRVAPGRVMFELDGVPEDVAREALRLGAAKLPIKTRFIQRIAE</sequence>
<comment type="function">
    <text evidence="1">Binds 23S rRNA and is also seen to make contacts with the A and possibly P site tRNAs.</text>
</comment>
<comment type="subunit">
    <text evidence="1">Part of the 50S ribosomal subunit.</text>
</comment>
<comment type="similarity">
    <text evidence="1">Belongs to the universal ribosomal protein uL16 family.</text>
</comment>
<dbReference type="EMBL" id="CP000708">
    <property type="protein sequence ID" value="ABQ60358.1"/>
    <property type="molecule type" value="Genomic_DNA"/>
</dbReference>
<dbReference type="RefSeq" id="WP_002964355.1">
    <property type="nucleotide sequence ID" value="NC_009505.1"/>
</dbReference>
<dbReference type="SMR" id="A5VQZ9"/>
<dbReference type="GeneID" id="97533531"/>
<dbReference type="KEGG" id="bov:BOV_1189"/>
<dbReference type="HOGENOM" id="CLU_078858_2_1_5"/>
<dbReference type="PhylomeDB" id="A5VQZ9"/>
<dbReference type="Proteomes" id="UP000006383">
    <property type="component" value="Chromosome I"/>
</dbReference>
<dbReference type="GO" id="GO:0022625">
    <property type="term" value="C:cytosolic large ribosomal subunit"/>
    <property type="evidence" value="ECO:0007669"/>
    <property type="project" value="TreeGrafter"/>
</dbReference>
<dbReference type="GO" id="GO:0019843">
    <property type="term" value="F:rRNA binding"/>
    <property type="evidence" value="ECO:0007669"/>
    <property type="project" value="UniProtKB-UniRule"/>
</dbReference>
<dbReference type="GO" id="GO:0003735">
    <property type="term" value="F:structural constituent of ribosome"/>
    <property type="evidence" value="ECO:0007669"/>
    <property type="project" value="InterPro"/>
</dbReference>
<dbReference type="GO" id="GO:0000049">
    <property type="term" value="F:tRNA binding"/>
    <property type="evidence" value="ECO:0007669"/>
    <property type="project" value="UniProtKB-KW"/>
</dbReference>
<dbReference type="GO" id="GO:0006412">
    <property type="term" value="P:translation"/>
    <property type="evidence" value="ECO:0007669"/>
    <property type="project" value="UniProtKB-UniRule"/>
</dbReference>
<dbReference type="CDD" id="cd01433">
    <property type="entry name" value="Ribosomal_L16_L10e"/>
    <property type="match status" value="1"/>
</dbReference>
<dbReference type="FunFam" id="3.90.1170.10:FF:000001">
    <property type="entry name" value="50S ribosomal protein L16"/>
    <property type="match status" value="1"/>
</dbReference>
<dbReference type="Gene3D" id="3.90.1170.10">
    <property type="entry name" value="Ribosomal protein L10e/L16"/>
    <property type="match status" value="1"/>
</dbReference>
<dbReference type="HAMAP" id="MF_01342">
    <property type="entry name" value="Ribosomal_uL16"/>
    <property type="match status" value="1"/>
</dbReference>
<dbReference type="InterPro" id="IPR047873">
    <property type="entry name" value="Ribosomal_uL16"/>
</dbReference>
<dbReference type="InterPro" id="IPR000114">
    <property type="entry name" value="Ribosomal_uL16_bact-type"/>
</dbReference>
<dbReference type="InterPro" id="IPR020798">
    <property type="entry name" value="Ribosomal_uL16_CS"/>
</dbReference>
<dbReference type="InterPro" id="IPR016180">
    <property type="entry name" value="Ribosomal_uL16_dom"/>
</dbReference>
<dbReference type="InterPro" id="IPR036920">
    <property type="entry name" value="Ribosomal_uL16_sf"/>
</dbReference>
<dbReference type="NCBIfam" id="TIGR01164">
    <property type="entry name" value="rplP_bact"/>
    <property type="match status" value="1"/>
</dbReference>
<dbReference type="PANTHER" id="PTHR12220">
    <property type="entry name" value="50S/60S RIBOSOMAL PROTEIN L16"/>
    <property type="match status" value="1"/>
</dbReference>
<dbReference type="PANTHER" id="PTHR12220:SF13">
    <property type="entry name" value="LARGE RIBOSOMAL SUBUNIT PROTEIN UL16M"/>
    <property type="match status" value="1"/>
</dbReference>
<dbReference type="Pfam" id="PF00252">
    <property type="entry name" value="Ribosomal_L16"/>
    <property type="match status" value="1"/>
</dbReference>
<dbReference type="PRINTS" id="PR00060">
    <property type="entry name" value="RIBOSOMALL16"/>
</dbReference>
<dbReference type="SUPFAM" id="SSF54686">
    <property type="entry name" value="Ribosomal protein L16p/L10e"/>
    <property type="match status" value="1"/>
</dbReference>
<dbReference type="PROSITE" id="PS00586">
    <property type="entry name" value="RIBOSOMAL_L16_1"/>
    <property type="match status" value="1"/>
</dbReference>
<dbReference type="PROSITE" id="PS00701">
    <property type="entry name" value="RIBOSOMAL_L16_2"/>
    <property type="match status" value="1"/>
</dbReference>
<proteinExistence type="inferred from homology"/>
<keyword id="KW-0687">Ribonucleoprotein</keyword>
<keyword id="KW-0689">Ribosomal protein</keyword>
<keyword id="KW-0694">RNA-binding</keyword>
<keyword id="KW-0699">rRNA-binding</keyword>
<keyword id="KW-0820">tRNA-binding</keyword>
<reference key="1">
    <citation type="journal article" date="2009" name="PLoS ONE">
        <title>Genome degradation in Brucella ovis corresponds with narrowing of its host range and tissue tropism.</title>
        <authorList>
            <person name="Tsolis R.M."/>
            <person name="Seshadri R."/>
            <person name="Santos R.L."/>
            <person name="Sangari F.J."/>
            <person name="Lobo J.M."/>
            <person name="de Jong M.F."/>
            <person name="Ren Q."/>
            <person name="Myers G."/>
            <person name="Brinkac L.M."/>
            <person name="Nelson W.C."/>
            <person name="Deboy R.T."/>
            <person name="Angiuoli S."/>
            <person name="Khouri H."/>
            <person name="Dimitrov G."/>
            <person name="Robinson J.R."/>
            <person name="Mulligan S."/>
            <person name="Walker R.L."/>
            <person name="Elzer P.E."/>
            <person name="Hassan K.A."/>
            <person name="Paulsen I.T."/>
        </authorList>
    </citation>
    <scope>NUCLEOTIDE SEQUENCE [LARGE SCALE GENOMIC DNA]</scope>
    <source>
        <strain>ATCC 25840 / 63/290 / NCTC 10512</strain>
    </source>
</reference>